<sequence length="201" mass="21328">MRLNIVVVGVGGQGALTTSGIIARAAMRAGLNVVTAETHGMAQRGGSVEVHVRIGDVRAPLIPEGGADVMIALEPAEALRYAKFLNKNTLVILNTRKIIPPSVTAGTAKYPELDEIIGELRKVTPRVIPVNASEIAEKAGSVLATNVVVVGMLFGYYSMPFGIEHVEEAIRETMKSKIVDLNLKALKMGYNQAISGRPSAV</sequence>
<name>IORB_ARCFU</name>
<keyword id="KW-0560">Oxidoreductase</keyword>
<keyword id="KW-1185">Reference proteome</keyword>
<organism>
    <name type="scientific">Archaeoglobus fulgidus (strain ATCC 49558 / DSM 4304 / JCM 9628 / NBRC 100126 / VC-16)</name>
    <dbReference type="NCBI Taxonomy" id="224325"/>
    <lineage>
        <taxon>Archaea</taxon>
        <taxon>Methanobacteriati</taxon>
        <taxon>Methanobacteriota</taxon>
        <taxon>Archaeoglobi</taxon>
        <taxon>Archaeoglobales</taxon>
        <taxon>Archaeoglobaceae</taxon>
        <taxon>Archaeoglobus</taxon>
    </lineage>
</organism>
<gene>
    <name type="primary">iorB</name>
    <name type="ordered locus">AF_2030</name>
</gene>
<feature type="chain" id="PRO_0000099931" description="Indolepyruvate oxidoreductase subunit IorB">
    <location>
        <begin position="1"/>
        <end position="201"/>
    </location>
</feature>
<proteinExistence type="inferred from homology"/>
<dbReference type="EC" id="1.2.7.8"/>
<dbReference type="EMBL" id="AE000782">
    <property type="protein sequence ID" value="AAB89225.1"/>
    <property type="molecule type" value="Genomic_DNA"/>
</dbReference>
<dbReference type="PIR" id="E69503">
    <property type="entry name" value="E69503"/>
</dbReference>
<dbReference type="RefSeq" id="WP_010879522.1">
    <property type="nucleotide sequence ID" value="NC_000917.1"/>
</dbReference>
<dbReference type="SMR" id="O28249"/>
<dbReference type="STRING" id="224325.AF_2030"/>
<dbReference type="PaxDb" id="224325-AF_2030"/>
<dbReference type="DNASU" id="1485256"/>
<dbReference type="EnsemblBacteria" id="AAB89225">
    <property type="protein sequence ID" value="AAB89225"/>
    <property type="gene ID" value="AF_2030"/>
</dbReference>
<dbReference type="KEGG" id="afu:AF_2030"/>
<dbReference type="eggNOG" id="arCOG01602">
    <property type="taxonomic scope" value="Archaea"/>
</dbReference>
<dbReference type="HOGENOM" id="CLU_087284_1_1_2"/>
<dbReference type="OrthoDB" id="53326at2157"/>
<dbReference type="PhylomeDB" id="O28249"/>
<dbReference type="Proteomes" id="UP000002199">
    <property type="component" value="Chromosome"/>
</dbReference>
<dbReference type="GO" id="GO:0043805">
    <property type="term" value="F:indolepyruvate ferredoxin oxidoreductase activity"/>
    <property type="evidence" value="ECO:0007669"/>
    <property type="project" value="UniProtKB-EC"/>
</dbReference>
<dbReference type="Gene3D" id="3.40.920.10">
    <property type="entry name" value="Pyruvate-ferredoxin oxidoreductase, PFOR, domain III"/>
    <property type="match status" value="1"/>
</dbReference>
<dbReference type="InterPro" id="IPR017719">
    <property type="entry name" value="Indolepyruvate_Fd_OxRdtase_bsu"/>
</dbReference>
<dbReference type="InterPro" id="IPR052198">
    <property type="entry name" value="IorB_Oxidoreductase"/>
</dbReference>
<dbReference type="InterPro" id="IPR019752">
    <property type="entry name" value="Pyrv/ketoisovalerate_OxRed_cat"/>
</dbReference>
<dbReference type="InterPro" id="IPR002869">
    <property type="entry name" value="Pyrv_flavodox_OxRed_cen"/>
</dbReference>
<dbReference type="NCBIfam" id="TIGR03334">
    <property type="entry name" value="IOR_beta"/>
    <property type="match status" value="1"/>
</dbReference>
<dbReference type="NCBIfam" id="NF005323">
    <property type="entry name" value="PRK06853.1-3"/>
    <property type="match status" value="1"/>
</dbReference>
<dbReference type="PANTHER" id="PTHR43854">
    <property type="entry name" value="INDOLEPYRUVATE OXIDOREDUCTASE SUBUNIT IORB"/>
    <property type="match status" value="1"/>
</dbReference>
<dbReference type="PANTHER" id="PTHR43854:SF1">
    <property type="entry name" value="INDOLEPYRUVATE OXIDOREDUCTASE SUBUNIT IORB"/>
    <property type="match status" value="1"/>
</dbReference>
<dbReference type="Pfam" id="PF01558">
    <property type="entry name" value="POR"/>
    <property type="match status" value="1"/>
</dbReference>
<dbReference type="SUPFAM" id="SSF53323">
    <property type="entry name" value="Pyruvate-ferredoxin oxidoreductase, PFOR, domain III"/>
    <property type="match status" value="1"/>
</dbReference>
<evidence type="ECO:0000250" key="1"/>
<protein>
    <recommendedName>
        <fullName>Indolepyruvate oxidoreductase subunit IorB</fullName>
        <shortName>IOR</shortName>
        <ecNumber>1.2.7.8</ecNumber>
    </recommendedName>
    <alternativeName>
        <fullName>Indolepyruvate ferredoxin oxidoreductase subunit beta</fullName>
    </alternativeName>
</protein>
<reference key="1">
    <citation type="journal article" date="1997" name="Nature">
        <title>The complete genome sequence of the hyperthermophilic, sulphate-reducing archaeon Archaeoglobus fulgidus.</title>
        <authorList>
            <person name="Klenk H.-P."/>
            <person name="Clayton R.A."/>
            <person name="Tomb J.-F."/>
            <person name="White O."/>
            <person name="Nelson K.E."/>
            <person name="Ketchum K.A."/>
            <person name="Dodson R.J."/>
            <person name="Gwinn M.L."/>
            <person name="Hickey E.K."/>
            <person name="Peterson J.D."/>
            <person name="Richardson D.L."/>
            <person name="Kerlavage A.R."/>
            <person name="Graham D.E."/>
            <person name="Kyrpides N.C."/>
            <person name="Fleischmann R.D."/>
            <person name="Quackenbush J."/>
            <person name="Lee N.H."/>
            <person name="Sutton G.G."/>
            <person name="Gill S.R."/>
            <person name="Kirkness E.F."/>
            <person name="Dougherty B.A."/>
            <person name="McKenney K."/>
            <person name="Adams M.D."/>
            <person name="Loftus B.J."/>
            <person name="Peterson S.N."/>
            <person name="Reich C.I."/>
            <person name="McNeil L.K."/>
            <person name="Badger J.H."/>
            <person name="Glodek A."/>
            <person name="Zhou L."/>
            <person name="Overbeek R."/>
            <person name="Gocayne J.D."/>
            <person name="Weidman J.F."/>
            <person name="McDonald L.A."/>
            <person name="Utterback T.R."/>
            <person name="Cotton M.D."/>
            <person name="Spriggs T."/>
            <person name="Artiach P."/>
            <person name="Kaine B.P."/>
            <person name="Sykes S.M."/>
            <person name="Sadow P.W."/>
            <person name="D'Andrea K.P."/>
            <person name="Bowman C."/>
            <person name="Fujii C."/>
            <person name="Garland S.A."/>
            <person name="Mason T.M."/>
            <person name="Olsen G.J."/>
            <person name="Fraser C.M."/>
            <person name="Smith H.O."/>
            <person name="Woese C.R."/>
            <person name="Venter J.C."/>
        </authorList>
    </citation>
    <scope>NUCLEOTIDE SEQUENCE [LARGE SCALE GENOMIC DNA]</scope>
    <source>
        <strain>ATCC 49558 / DSM 4304 / JCM 9628 / NBRC 100126 / VC-16</strain>
    </source>
</reference>
<comment type="function">
    <text evidence="1">Catalyzes the ferredoxin-dependent oxidative decarboxylation of arylpyruvates.</text>
</comment>
<comment type="catalytic activity">
    <reaction>
        <text>indole-3-pyruvate + 2 oxidized [2Fe-2S]-[ferredoxin] + CoA = (indol-3-yl)acetyl-CoA + 2 reduced [2Fe-2S]-[ferredoxin] + CO2 + H(+)</text>
        <dbReference type="Rhea" id="RHEA:12645"/>
        <dbReference type="Rhea" id="RHEA-COMP:10000"/>
        <dbReference type="Rhea" id="RHEA-COMP:10001"/>
        <dbReference type="ChEBI" id="CHEBI:15378"/>
        <dbReference type="ChEBI" id="CHEBI:16526"/>
        <dbReference type="ChEBI" id="CHEBI:17640"/>
        <dbReference type="ChEBI" id="CHEBI:33737"/>
        <dbReference type="ChEBI" id="CHEBI:33738"/>
        <dbReference type="ChEBI" id="CHEBI:57271"/>
        <dbReference type="ChEBI" id="CHEBI:57287"/>
        <dbReference type="EC" id="1.2.7.8"/>
    </reaction>
</comment>
<comment type="subunit">
    <text>Heterodimer of the IorA and IorB subunits.</text>
</comment>
<accession>O28249</accession>